<proteinExistence type="evidence at transcript level"/>
<accession>Q8H9D2</accession>
<dbReference type="EC" id="1.6.5.2"/>
<dbReference type="EMBL" id="AB061251">
    <property type="protein sequence ID" value="BAC23037.1"/>
    <property type="molecule type" value="mRNA"/>
</dbReference>
<dbReference type="RefSeq" id="NP_001275452.1">
    <property type="nucleotide sequence ID" value="NM_001288523.1"/>
</dbReference>
<dbReference type="SMR" id="Q8H9D2"/>
<dbReference type="FunCoup" id="Q8H9D2">
    <property type="interactions" value="222"/>
</dbReference>
<dbReference type="STRING" id="4113.Q8H9D2"/>
<dbReference type="PaxDb" id="4113-PGSC0003DMT400013821"/>
<dbReference type="EnsemblPlants" id="PGSC0003DMT400013821">
    <property type="protein sequence ID" value="PGSC0003DMT400013821"/>
    <property type="gene ID" value="PGSC0003DMG400005404"/>
</dbReference>
<dbReference type="GeneID" id="102582514"/>
<dbReference type="Gramene" id="PGSC0003DMT400013821">
    <property type="protein sequence ID" value="PGSC0003DMT400013821"/>
    <property type="gene ID" value="PGSC0003DMG400005404"/>
</dbReference>
<dbReference type="KEGG" id="sot:102582514"/>
<dbReference type="eggNOG" id="KOG4530">
    <property type="taxonomic scope" value="Eukaryota"/>
</dbReference>
<dbReference type="HOGENOM" id="CLU_055322_4_2_1"/>
<dbReference type="InParanoid" id="Q8H9D2"/>
<dbReference type="OMA" id="LECWLAP"/>
<dbReference type="OrthoDB" id="68575at2759"/>
<dbReference type="Proteomes" id="UP000011115">
    <property type="component" value="Unassembled WGS sequence"/>
</dbReference>
<dbReference type="ExpressionAtlas" id="Q8H9D2">
    <property type="expression patterns" value="baseline and differential"/>
</dbReference>
<dbReference type="GO" id="GO:0005829">
    <property type="term" value="C:cytosol"/>
    <property type="evidence" value="ECO:0000318"/>
    <property type="project" value="GO_Central"/>
</dbReference>
<dbReference type="GO" id="GO:0010181">
    <property type="term" value="F:FMN binding"/>
    <property type="evidence" value="ECO:0000318"/>
    <property type="project" value="GO_Central"/>
</dbReference>
<dbReference type="GO" id="GO:0050136">
    <property type="term" value="F:NADH:ubiquinone reductase (non-electrogenic) activity"/>
    <property type="evidence" value="ECO:0007669"/>
    <property type="project" value="RHEA"/>
</dbReference>
<dbReference type="GO" id="GO:0008753">
    <property type="term" value="F:NADPH dehydrogenase (quinone) activity"/>
    <property type="evidence" value="ECO:0007669"/>
    <property type="project" value="RHEA"/>
</dbReference>
<dbReference type="FunFam" id="3.40.50.360:FF:000031">
    <property type="entry name" value="NADPH:quinone oxidoreductase"/>
    <property type="match status" value="1"/>
</dbReference>
<dbReference type="Gene3D" id="3.40.50.360">
    <property type="match status" value="1"/>
</dbReference>
<dbReference type="InterPro" id="IPR029039">
    <property type="entry name" value="Flavoprotein-like_sf"/>
</dbReference>
<dbReference type="InterPro" id="IPR005025">
    <property type="entry name" value="FMN_Rdtase-like_dom"/>
</dbReference>
<dbReference type="InterPro" id="IPR050712">
    <property type="entry name" value="NAD(P)H-dep_reductase"/>
</dbReference>
<dbReference type="PANTHER" id="PTHR30543">
    <property type="entry name" value="CHROMATE REDUCTASE"/>
    <property type="match status" value="1"/>
</dbReference>
<dbReference type="PANTHER" id="PTHR30543:SF21">
    <property type="entry name" value="NAD(P)H-DEPENDENT FMN REDUCTASE LOT6"/>
    <property type="match status" value="1"/>
</dbReference>
<dbReference type="Pfam" id="PF03358">
    <property type="entry name" value="FMN_red"/>
    <property type="match status" value="1"/>
</dbReference>
<dbReference type="SUPFAM" id="SSF52218">
    <property type="entry name" value="Flavoproteins"/>
    <property type="match status" value="1"/>
</dbReference>
<organism>
    <name type="scientific">Solanum tuberosum</name>
    <name type="common">Potato</name>
    <dbReference type="NCBI Taxonomy" id="4113"/>
    <lineage>
        <taxon>Eukaryota</taxon>
        <taxon>Viridiplantae</taxon>
        <taxon>Streptophyta</taxon>
        <taxon>Embryophyta</taxon>
        <taxon>Tracheophyta</taxon>
        <taxon>Spermatophyta</taxon>
        <taxon>Magnoliopsida</taxon>
        <taxon>eudicotyledons</taxon>
        <taxon>Gunneridae</taxon>
        <taxon>Pentapetalae</taxon>
        <taxon>asterids</taxon>
        <taxon>lamiids</taxon>
        <taxon>Solanales</taxon>
        <taxon>Solanaceae</taxon>
        <taxon>Solanoideae</taxon>
        <taxon>Solaneae</taxon>
        <taxon>Solanum</taxon>
    </lineage>
</organism>
<sequence length="194" mass="21316">MAAQPVIKVAGLCGSLRKGSYNRGLLNAAMEICKDSITGMEIEYVDISPLPFLNTDLEVNGTYPPVVEAFRKKIEEADCFLFASPEYNYSITGPLKNAIDWASRPPNVWADKAAAMVSAGGGFGGGRSQYHLRQIGVFLDLHFINKPEFFLNAFQQPPKFDSDGVLTDEETKQRLRAVLLALQALALKLKGKCE</sequence>
<protein>
    <recommendedName>
        <fullName>NAD(P)H:quinone oxidoreductase</fullName>
        <shortName>NAD(P)H:QR</shortName>
        <ecNumber>1.6.5.2</ecNumber>
    </recommendedName>
</protein>
<evidence type="ECO:0000250" key="1"/>
<evidence type="ECO:0000269" key="2">
    <source ref="1"/>
</evidence>
<evidence type="ECO:0000305" key="3"/>
<keyword id="KW-0285">Flavoprotein</keyword>
<keyword id="KW-0288">FMN</keyword>
<keyword id="KW-0520">NAD</keyword>
<keyword id="KW-0521">NADP</keyword>
<keyword id="KW-0560">Oxidoreductase</keyword>
<keyword id="KW-1185">Reference proteome</keyword>
<feature type="chain" id="PRO_0000160602" description="NAD(P)H:quinone oxidoreductase">
    <location>
        <begin position="1"/>
        <end position="194"/>
    </location>
</feature>
<reference key="1">
    <citation type="journal article" date="2003" name="J. Gen. Plant Pathol.">
        <title>Elicitation of primary and secondary metabolism during defense in the potato.</title>
        <authorList>
            <person name="Nakane E."/>
            <person name="Kawakita K."/>
            <person name="Doke N."/>
            <person name="Yoshioka H."/>
        </authorList>
    </citation>
    <scope>NUCLEOTIDE SEQUENCE [MRNA]</scope>
    <scope>INDUCTION</scope>
</reference>
<reference key="2">
    <citation type="journal article" date="2011" name="Nature">
        <title>Genome sequence and analysis of the tuber crop potato.</title>
        <authorList>
            <consortium name="The Potato Genome Sequencing Consortium"/>
        </authorList>
    </citation>
    <scope>NUCLEOTIDE SEQUENCE [LARGE SCALE GENOMIC DNA]</scope>
    <source>
        <strain>cv. DM1-3 516 R44</strain>
    </source>
</reference>
<comment type="function">
    <text evidence="1">The enzyme apparently serves as a quinone reductase in connection with conjugation reactions of hydroquinones involved in detoxification pathways.</text>
</comment>
<comment type="catalytic activity">
    <reaction>
        <text>a quinone + NADH + H(+) = a quinol + NAD(+)</text>
        <dbReference type="Rhea" id="RHEA:46160"/>
        <dbReference type="ChEBI" id="CHEBI:15378"/>
        <dbReference type="ChEBI" id="CHEBI:24646"/>
        <dbReference type="ChEBI" id="CHEBI:57540"/>
        <dbReference type="ChEBI" id="CHEBI:57945"/>
        <dbReference type="ChEBI" id="CHEBI:132124"/>
        <dbReference type="EC" id="1.6.5.2"/>
    </reaction>
</comment>
<comment type="catalytic activity">
    <reaction>
        <text>a quinone + NADPH + H(+) = a quinol + NADP(+)</text>
        <dbReference type="Rhea" id="RHEA:46164"/>
        <dbReference type="ChEBI" id="CHEBI:15378"/>
        <dbReference type="ChEBI" id="CHEBI:24646"/>
        <dbReference type="ChEBI" id="CHEBI:57783"/>
        <dbReference type="ChEBI" id="CHEBI:58349"/>
        <dbReference type="ChEBI" id="CHEBI:132124"/>
        <dbReference type="EC" id="1.6.5.2"/>
    </reaction>
</comment>
<comment type="cofactor">
    <cofactor evidence="1">
        <name>FMN</name>
        <dbReference type="ChEBI" id="CHEBI:58210"/>
    </cofactor>
</comment>
<comment type="subunit">
    <text evidence="1">Homotetramer.</text>
</comment>
<comment type="induction">
    <text evidence="2">By P.infestans.</text>
</comment>
<comment type="similarity">
    <text evidence="3">Belongs to the SsuE family.</text>
</comment>
<name>NQR_SOLTU</name>